<proteinExistence type="inferred from homology"/>
<feature type="chain" id="PRO_1000066475" description="Orotidine 5'-phosphate decarboxylase">
    <location>
        <begin position="1"/>
        <end position="278"/>
    </location>
</feature>
<feature type="active site" description="Proton donor" evidence="1">
    <location>
        <position position="95"/>
    </location>
</feature>
<dbReference type="EC" id="4.1.1.23" evidence="1"/>
<dbReference type="EMBL" id="CP000555">
    <property type="protein sequence ID" value="ABM96578.1"/>
    <property type="molecule type" value="Genomic_DNA"/>
</dbReference>
<dbReference type="RefSeq" id="WP_011831198.1">
    <property type="nucleotide sequence ID" value="NC_008825.1"/>
</dbReference>
<dbReference type="SMR" id="A2SLY9"/>
<dbReference type="STRING" id="420662.Mpe_A3625"/>
<dbReference type="KEGG" id="mpt:Mpe_A3625"/>
<dbReference type="eggNOG" id="COG0284">
    <property type="taxonomic scope" value="Bacteria"/>
</dbReference>
<dbReference type="HOGENOM" id="CLU_060704_1_0_4"/>
<dbReference type="UniPathway" id="UPA00070">
    <property type="reaction ID" value="UER00120"/>
</dbReference>
<dbReference type="Proteomes" id="UP000000366">
    <property type="component" value="Chromosome"/>
</dbReference>
<dbReference type="GO" id="GO:0004590">
    <property type="term" value="F:orotidine-5'-phosphate decarboxylase activity"/>
    <property type="evidence" value="ECO:0007669"/>
    <property type="project" value="UniProtKB-UniRule"/>
</dbReference>
<dbReference type="GO" id="GO:0006207">
    <property type="term" value="P:'de novo' pyrimidine nucleobase biosynthetic process"/>
    <property type="evidence" value="ECO:0007669"/>
    <property type="project" value="InterPro"/>
</dbReference>
<dbReference type="GO" id="GO:0044205">
    <property type="term" value="P:'de novo' UMP biosynthetic process"/>
    <property type="evidence" value="ECO:0007669"/>
    <property type="project" value="UniProtKB-UniRule"/>
</dbReference>
<dbReference type="CDD" id="cd04725">
    <property type="entry name" value="OMP_decarboxylase_like"/>
    <property type="match status" value="1"/>
</dbReference>
<dbReference type="Gene3D" id="3.20.20.70">
    <property type="entry name" value="Aldolase class I"/>
    <property type="match status" value="1"/>
</dbReference>
<dbReference type="HAMAP" id="MF_01215">
    <property type="entry name" value="OMPdecase_type2"/>
    <property type="match status" value="1"/>
</dbReference>
<dbReference type="InterPro" id="IPR013785">
    <property type="entry name" value="Aldolase_TIM"/>
</dbReference>
<dbReference type="InterPro" id="IPR018089">
    <property type="entry name" value="OMPdecase_AS"/>
</dbReference>
<dbReference type="InterPro" id="IPR011995">
    <property type="entry name" value="OMPdecase_type-2"/>
</dbReference>
<dbReference type="InterPro" id="IPR001754">
    <property type="entry name" value="OMPdeCOase_dom"/>
</dbReference>
<dbReference type="InterPro" id="IPR011060">
    <property type="entry name" value="RibuloseP-bd_barrel"/>
</dbReference>
<dbReference type="NCBIfam" id="TIGR02127">
    <property type="entry name" value="pyrF_sub2"/>
    <property type="match status" value="1"/>
</dbReference>
<dbReference type="PANTHER" id="PTHR43375">
    <property type="entry name" value="OROTIDINE 5'-PHOSPHATE DECARBOXYLASE"/>
    <property type="match status" value="1"/>
</dbReference>
<dbReference type="PANTHER" id="PTHR43375:SF1">
    <property type="entry name" value="OROTIDINE 5'-PHOSPHATE DECARBOXYLASE"/>
    <property type="match status" value="1"/>
</dbReference>
<dbReference type="Pfam" id="PF00215">
    <property type="entry name" value="OMPdecase"/>
    <property type="match status" value="1"/>
</dbReference>
<dbReference type="SMART" id="SM00934">
    <property type="entry name" value="OMPdecase"/>
    <property type="match status" value="1"/>
</dbReference>
<dbReference type="SUPFAM" id="SSF51366">
    <property type="entry name" value="Ribulose-phoshate binding barrel"/>
    <property type="match status" value="1"/>
</dbReference>
<dbReference type="PROSITE" id="PS00156">
    <property type="entry name" value="OMPDECASE"/>
    <property type="match status" value="1"/>
</dbReference>
<keyword id="KW-0210">Decarboxylase</keyword>
<keyword id="KW-0456">Lyase</keyword>
<keyword id="KW-0665">Pyrimidine biosynthesis</keyword>
<keyword id="KW-1185">Reference proteome</keyword>
<reference key="1">
    <citation type="journal article" date="2007" name="J. Bacteriol.">
        <title>Whole-genome analysis of the methyl tert-butyl ether-degrading beta-proteobacterium Methylibium petroleiphilum PM1.</title>
        <authorList>
            <person name="Kane S.R."/>
            <person name="Chakicherla A.Y."/>
            <person name="Chain P.S.G."/>
            <person name="Schmidt R."/>
            <person name="Shin M.W."/>
            <person name="Legler T.C."/>
            <person name="Scow K.M."/>
            <person name="Larimer F.W."/>
            <person name="Lucas S.M."/>
            <person name="Richardson P.M."/>
            <person name="Hristova K.R."/>
        </authorList>
    </citation>
    <scope>NUCLEOTIDE SEQUENCE [LARGE SCALE GENOMIC DNA]</scope>
    <source>
        <strain>ATCC BAA-1232 / LMG 22953 / PM1</strain>
    </source>
</reference>
<organism>
    <name type="scientific">Methylibium petroleiphilum (strain ATCC BAA-1232 / LMG 22953 / PM1)</name>
    <dbReference type="NCBI Taxonomy" id="420662"/>
    <lineage>
        <taxon>Bacteria</taxon>
        <taxon>Pseudomonadati</taxon>
        <taxon>Pseudomonadota</taxon>
        <taxon>Betaproteobacteria</taxon>
        <taxon>Burkholderiales</taxon>
        <taxon>Sphaerotilaceae</taxon>
        <taxon>Methylibium</taxon>
    </lineage>
</organism>
<name>PYRF_METPP</name>
<sequence>MSFRARLLAAERLNDSLLCVGLDPEPSKFPAPWTGDATRIFDFCARIVDATKDLVIAFKPQIAYFAAHRAEDQLERLMAYLRRVAPDVPVILDAKRGDIGSTAEQYAREAFERYQADAVTLSPFMGFDSVEPYLRWPGKGAILLCRTSNPGGSDLQNQRLADVDGTPRLYEHLAQLAQGPWNTNGQLGLVVGATFPEELARVRALAPTLPLLIPGVGAQGGDAAATVKAAWRGDKATTSAPIIVNSSRAVLYAGRDAEFASAARQVALATRAALNAAR</sequence>
<evidence type="ECO:0000255" key="1">
    <source>
        <dbReference type="HAMAP-Rule" id="MF_01215"/>
    </source>
</evidence>
<gene>
    <name evidence="1" type="primary">pyrF</name>
    <name type="ordered locus">Mpe_A3625</name>
</gene>
<protein>
    <recommendedName>
        <fullName evidence="1">Orotidine 5'-phosphate decarboxylase</fullName>
        <ecNumber evidence="1">4.1.1.23</ecNumber>
    </recommendedName>
    <alternativeName>
        <fullName evidence="1">OMP decarboxylase</fullName>
        <shortName evidence="1">OMPDCase</shortName>
        <shortName evidence="1">OMPdecase</shortName>
    </alternativeName>
</protein>
<comment type="catalytic activity">
    <reaction evidence="1">
        <text>orotidine 5'-phosphate + H(+) = UMP + CO2</text>
        <dbReference type="Rhea" id="RHEA:11596"/>
        <dbReference type="ChEBI" id="CHEBI:15378"/>
        <dbReference type="ChEBI" id="CHEBI:16526"/>
        <dbReference type="ChEBI" id="CHEBI:57538"/>
        <dbReference type="ChEBI" id="CHEBI:57865"/>
        <dbReference type="EC" id="4.1.1.23"/>
    </reaction>
</comment>
<comment type="pathway">
    <text evidence="1">Pyrimidine metabolism; UMP biosynthesis via de novo pathway; UMP from orotate: step 2/2.</text>
</comment>
<comment type="similarity">
    <text evidence="1">Belongs to the OMP decarboxylase family. Type 2 subfamily.</text>
</comment>
<accession>A2SLY9</accession>